<keyword id="KW-0560">Oxidoreductase</keyword>
<organism>
    <name type="scientific">Stachybotrys chartarum (strain CBS 109288 / IBT 7711)</name>
    <name type="common">Toxic black mold</name>
    <name type="synonym">Stilbospora chartarum</name>
    <dbReference type="NCBI Taxonomy" id="1280523"/>
    <lineage>
        <taxon>Eukaryota</taxon>
        <taxon>Fungi</taxon>
        <taxon>Dikarya</taxon>
        <taxon>Ascomycota</taxon>
        <taxon>Pezizomycotina</taxon>
        <taxon>Sordariomycetes</taxon>
        <taxon>Hypocreomycetidae</taxon>
        <taxon>Hypocreales</taxon>
        <taxon>Stachybotryaceae</taxon>
        <taxon>Stachybotrys</taxon>
    </lineage>
</organism>
<accession>A0A084AFG6</accession>
<dbReference type="EC" id="1.-.-.-" evidence="4"/>
<dbReference type="EMBL" id="KL648755">
    <property type="protein sequence ID" value="KEY64045.1"/>
    <property type="molecule type" value="Genomic_DNA"/>
</dbReference>
<dbReference type="SMR" id="A0A084AFG6"/>
<dbReference type="HOGENOM" id="CLU_041041_0_0_1"/>
<dbReference type="OrthoDB" id="223552at5125"/>
<dbReference type="Proteomes" id="UP000028045">
    <property type="component" value="Unassembled WGS sequence"/>
</dbReference>
<dbReference type="GO" id="GO:0016491">
    <property type="term" value="F:oxidoreductase activity"/>
    <property type="evidence" value="ECO:0007669"/>
    <property type="project" value="UniProtKB-KW"/>
</dbReference>
<dbReference type="Gene3D" id="3.60.130.10">
    <property type="entry name" value="Clavaminate synthase-like"/>
    <property type="match status" value="1"/>
</dbReference>
<dbReference type="InterPro" id="IPR050411">
    <property type="entry name" value="AlphaKG_dependent_hydroxylases"/>
</dbReference>
<dbReference type="InterPro" id="IPR042098">
    <property type="entry name" value="TauD-like_sf"/>
</dbReference>
<dbReference type="InterPro" id="IPR003819">
    <property type="entry name" value="TauD/TfdA-like"/>
</dbReference>
<dbReference type="PANTHER" id="PTHR10696:SF54">
    <property type="entry name" value="FAMILY OXIDOREDUCTASE, PUTATIVE (AFU_ORTHOLOGUE AFUA_4G13850)-RELATED"/>
    <property type="match status" value="1"/>
</dbReference>
<dbReference type="PANTHER" id="PTHR10696">
    <property type="entry name" value="GAMMA-BUTYROBETAINE HYDROXYLASE-RELATED"/>
    <property type="match status" value="1"/>
</dbReference>
<dbReference type="Pfam" id="PF02668">
    <property type="entry name" value="TauD"/>
    <property type="match status" value="1"/>
</dbReference>
<dbReference type="SUPFAM" id="SSF51197">
    <property type="entry name" value="Clavaminate synthase-like"/>
    <property type="match status" value="1"/>
</dbReference>
<comment type="function">
    <text evidence="4">Taurine hydroxylase-like protein; part of the satratoxin SC3 cluster involved in the biosynthesis of satratoxins, trichothecene mycotoxins that are associated with human food poisonings (PubMed:25015739). Satratoxins are suggested to be made by products of multiple gene clusters (SC1, SC2 and SC3) that encode 21 proteins in all, including polyketide synthases, acetyltransferases, and other enzymes expected to modify the trichothecene skeleton (PubMed:25015739). SC1 encodes 10 proteins, SAT1 to SAT10 (PubMed:25015739). The largest are SAT8, which encodes a putative polyketide synthase (PKS) with a conventional non-reducing architecture, and SAT10, a putative protein containing four ankyrin repeats and thus may be involved in protein scaffolding (PubMed:25015739). The putative short-chain reductase SAT3 may assist the PKS in some capacity (PubMed:25015739). SAT6 contains a secretory lipase domain and acts probably as a trichothecene esterase (PubMed:25015739). SAT5 encodes a putative acetyltransferase, and so, with SAT6, may affect endogenous protection from toxicity (PubMed:25015739). The probable transcription factor SAT9 may regulate the expression of the SC1 cluster (PubMed:25015739). SC2 encodes proteins SAT11 to SAT16, the largest of which encodes the putative reducing PKS SAT13 (PubMed:25015739). SAT11 is a cytochrome P450 monooxygenase, while SAT14 and SAT16 are probable acetyltransferases (PubMed:25015739). The SC2 cluster may be regulated by the transcription factor SAT15 (PubMed:25015739). SC3 is a small cluster that encodes 5 proteins, SAT17 to SAT21 (PubMed:25015739). SAT21 is a putative MFS-type transporter which may have a role in exporting secondary metabolites (PubMed:25015739). The four other proteins putatively encoded in SC3 include the taurine hydroxylase-like protein SAT17, the O-methyltransferase SAT18, the acetyltransferase SAT19, and the Cys6-type zinc finger SAT20, the latter being probably involved in regulation of SC3 expression (PubMed:25015739).</text>
</comment>
<comment type="pathway">
    <text evidence="1">Mycotoxin biosynthesis.</text>
</comment>
<comment type="miscellaneous">
    <text evidence="3">Trichothecenes are sesquiterpenoid toxins that act by inhibiting protein biosynthesis.</text>
</comment>
<protein>
    <recommendedName>
        <fullName evidence="2">Taurine hydroxylase-like protein SAT17</fullName>
        <ecNumber evidence="4">1.-.-.-</ecNumber>
    </recommendedName>
    <alternativeName>
        <fullName evidence="2">Satratoxin biosynthesis SC3 cluster protein 17</fullName>
    </alternativeName>
</protein>
<reference key="1">
    <citation type="journal article" date="2014" name="BMC Genomics">
        <title>Comparative genome sequencing reveals chemotype-specific gene clusters in the toxigenic black mold Stachybotrys.</title>
        <authorList>
            <person name="Semeiks J."/>
            <person name="Borek D."/>
            <person name="Otwinowski Z."/>
            <person name="Grishin N.V."/>
        </authorList>
    </citation>
    <scope>NUCLEOTIDE SEQUENCE [LARGE SCALE GENOMIC DNA]</scope>
    <scope>IDENTIFICATION</scope>
    <scope>FUNCTION</scope>
    <source>
        <strain>CBS 109288 / IBT 7711</strain>
    </source>
</reference>
<evidence type="ECO:0000269" key="1">
    <source>
    </source>
</evidence>
<evidence type="ECO:0000303" key="2">
    <source>
    </source>
</evidence>
<evidence type="ECO:0000305" key="3"/>
<evidence type="ECO:0000305" key="4">
    <source>
    </source>
</evidence>
<sequence length="385" mass="43530">MAASPVLATTSHPIGHEAAVVTDADLDRHYAVKLAGKLNDEMAWVGQQFTGEEDFVVCLSEADVAEVNAALTAFQDTGLKPGYLSPETFKLPKLGPKLRLLSQRIHEQEGFIVLRGLQPWRYRRLENTIVFTGIASYIGNRRGVQCADGPVMTHIFDYSTEVEEKEKLNDGYLGHANRTSYLPFHTDDGHIISLYCLQAADIGGRTLLASSHAIYNHLLETRPDVIETLKEEWIWDSFIPEKPSFIRPLLLEQDGKLICNYRIRPFLGTPGYPRNAALGPLPAHQEEALNTVAEIAEKLSLKFEFKTGDIQFLNNLSILHAREEFHCAKGDTTRRHLLRLVQMDDELAWRLPPGLSKDMDKMFQHDLEEEKFIWSPEPLPYVIGQ</sequence>
<feature type="chain" id="PRO_0000442397" description="Taurine hydroxylase-like protein SAT17">
    <location>
        <begin position="1"/>
        <end position="385"/>
    </location>
</feature>
<gene>
    <name evidence="2" type="primary">SAT17</name>
    <name type="ORF">S7711_07408</name>
</gene>
<name>SAT17_STACB</name>
<proteinExistence type="predicted"/>